<comment type="catalytic activity">
    <reaction evidence="1">
        <text>1-(2-carboxyphenylamino)-1-deoxy-D-ribulose 5-phosphate + H(+) = (1S,2R)-1-C-(indol-3-yl)glycerol 3-phosphate + CO2 + H2O</text>
        <dbReference type="Rhea" id="RHEA:23476"/>
        <dbReference type="ChEBI" id="CHEBI:15377"/>
        <dbReference type="ChEBI" id="CHEBI:15378"/>
        <dbReference type="ChEBI" id="CHEBI:16526"/>
        <dbReference type="ChEBI" id="CHEBI:58613"/>
        <dbReference type="ChEBI" id="CHEBI:58866"/>
        <dbReference type="EC" id="4.1.1.48"/>
    </reaction>
</comment>
<comment type="pathway">
    <text evidence="1">Amino-acid biosynthesis; L-tryptophan biosynthesis; L-tryptophan from chorismate: step 4/5.</text>
</comment>
<comment type="similarity">
    <text evidence="1">Belongs to the TrpC family.</text>
</comment>
<feature type="chain" id="PRO_1000095882" description="Indole-3-glycerol phosphate synthase">
    <location>
        <begin position="1"/>
        <end position="267"/>
    </location>
</feature>
<keyword id="KW-0028">Amino-acid biosynthesis</keyword>
<keyword id="KW-0057">Aromatic amino acid biosynthesis</keyword>
<keyword id="KW-0210">Decarboxylase</keyword>
<keyword id="KW-0456">Lyase</keyword>
<keyword id="KW-0822">Tryptophan biosynthesis</keyword>
<reference key="1">
    <citation type="submission" date="2008-05" db="EMBL/GenBank/DDBJ databases">
        <title>Complete sequence of chromosome 1 of Ralstonia pickettii 12J.</title>
        <authorList>
            <person name="Lucas S."/>
            <person name="Copeland A."/>
            <person name="Lapidus A."/>
            <person name="Glavina del Rio T."/>
            <person name="Dalin E."/>
            <person name="Tice H."/>
            <person name="Bruce D."/>
            <person name="Goodwin L."/>
            <person name="Pitluck S."/>
            <person name="Meincke L."/>
            <person name="Brettin T."/>
            <person name="Detter J.C."/>
            <person name="Han C."/>
            <person name="Kuske C.R."/>
            <person name="Schmutz J."/>
            <person name="Larimer F."/>
            <person name="Land M."/>
            <person name="Hauser L."/>
            <person name="Kyrpides N."/>
            <person name="Mikhailova N."/>
            <person name="Marsh T."/>
            <person name="Richardson P."/>
        </authorList>
    </citation>
    <scope>NUCLEOTIDE SEQUENCE [LARGE SCALE GENOMIC DNA]</scope>
    <source>
        <strain>12J</strain>
    </source>
</reference>
<protein>
    <recommendedName>
        <fullName evidence="1">Indole-3-glycerol phosphate synthase</fullName>
        <shortName evidence="1">IGPS</shortName>
        <ecNumber evidence="1">4.1.1.48</ecNumber>
    </recommendedName>
</protein>
<sequence>MSDILQKILAVKAEEVAAARKHRDLPSVRAEAEANRSDSTLRARGFARAMRDKIAAGNAAVIAEVKKASPSKGVLRPNFKPADIARSYAEHGAACLSVLTDEQFFQGHADYLREARAACTLPVLRKDFMVDLYQVYEARSWGADCILLIVAALDQGLMEELEACALELGMDVLVEVHDGHELDRALRLQTPLVGVNNRNLRTFETTLDTTLGLLKHMPDDRIVVTESGILTPDDVRKMRAAAVNAFLVGEAFMRADDPGAELARLFA</sequence>
<evidence type="ECO:0000255" key="1">
    <source>
        <dbReference type="HAMAP-Rule" id="MF_00134"/>
    </source>
</evidence>
<gene>
    <name evidence="1" type="primary">trpC</name>
    <name type="ordered locus">Rpic_3127</name>
</gene>
<proteinExistence type="inferred from homology"/>
<accession>B2UDK9</accession>
<name>TRPC_RALPJ</name>
<organism>
    <name type="scientific">Ralstonia pickettii (strain 12J)</name>
    <dbReference type="NCBI Taxonomy" id="402626"/>
    <lineage>
        <taxon>Bacteria</taxon>
        <taxon>Pseudomonadati</taxon>
        <taxon>Pseudomonadota</taxon>
        <taxon>Betaproteobacteria</taxon>
        <taxon>Burkholderiales</taxon>
        <taxon>Burkholderiaceae</taxon>
        <taxon>Ralstonia</taxon>
    </lineage>
</organism>
<dbReference type="EC" id="4.1.1.48" evidence="1"/>
<dbReference type="EMBL" id="CP001068">
    <property type="protein sequence ID" value="ACD28250.1"/>
    <property type="molecule type" value="Genomic_DNA"/>
</dbReference>
<dbReference type="SMR" id="B2UDK9"/>
<dbReference type="STRING" id="402626.Rpic_3127"/>
<dbReference type="KEGG" id="rpi:Rpic_3127"/>
<dbReference type="eggNOG" id="COG0134">
    <property type="taxonomic scope" value="Bacteria"/>
</dbReference>
<dbReference type="HOGENOM" id="CLU_034247_2_0_4"/>
<dbReference type="UniPathway" id="UPA00035">
    <property type="reaction ID" value="UER00043"/>
</dbReference>
<dbReference type="GO" id="GO:0004425">
    <property type="term" value="F:indole-3-glycerol-phosphate synthase activity"/>
    <property type="evidence" value="ECO:0007669"/>
    <property type="project" value="UniProtKB-UniRule"/>
</dbReference>
<dbReference type="GO" id="GO:0004640">
    <property type="term" value="F:phosphoribosylanthranilate isomerase activity"/>
    <property type="evidence" value="ECO:0007669"/>
    <property type="project" value="TreeGrafter"/>
</dbReference>
<dbReference type="GO" id="GO:0000162">
    <property type="term" value="P:L-tryptophan biosynthetic process"/>
    <property type="evidence" value="ECO:0007669"/>
    <property type="project" value="UniProtKB-UniRule"/>
</dbReference>
<dbReference type="CDD" id="cd00331">
    <property type="entry name" value="IGPS"/>
    <property type="match status" value="1"/>
</dbReference>
<dbReference type="FunFam" id="3.20.20.70:FF:000024">
    <property type="entry name" value="Indole-3-glycerol phosphate synthase"/>
    <property type="match status" value="1"/>
</dbReference>
<dbReference type="Gene3D" id="3.20.20.70">
    <property type="entry name" value="Aldolase class I"/>
    <property type="match status" value="1"/>
</dbReference>
<dbReference type="HAMAP" id="MF_00134_B">
    <property type="entry name" value="IGPS_B"/>
    <property type="match status" value="1"/>
</dbReference>
<dbReference type="InterPro" id="IPR013785">
    <property type="entry name" value="Aldolase_TIM"/>
</dbReference>
<dbReference type="InterPro" id="IPR045186">
    <property type="entry name" value="Indole-3-glycerol_P_synth"/>
</dbReference>
<dbReference type="InterPro" id="IPR013798">
    <property type="entry name" value="Indole-3-glycerol_P_synth_dom"/>
</dbReference>
<dbReference type="InterPro" id="IPR001468">
    <property type="entry name" value="Indole-3-GlycerolPSynthase_CS"/>
</dbReference>
<dbReference type="InterPro" id="IPR011060">
    <property type="entry name" value="RibuloseP-bd_barrel"/>
</dbReference>
<dbReference type="NCBIfam" id="NF001370">
    <property type="entry name" value="PRK00278.1-2"/>
    <property type="match status" value="1"/>
</dbReference>
<dbReference type="NCBIfam" id="NF001373">
    <property type="entry name" value="PRK00278.1-6"/>
    <property type="match status" value="1"/>
</dbReference>
<dbReference type="NCBIfam" id="NF001377">
    <property type="entry name" value="PRK00278.2-4"/>
    <property type="match status" value="1"/>
</dbReference>
<dbReference type="PANTHER" id="PTHR22854:SF2">
    <property type="entry name" value="INDOLE-3-GLYCEROL-PHOSPHATE SYNTHASE"/>
    <property type="match status" value="1"/>
</dbReference>
<dbReference type="PANTHER" id="PTHR22854">
    <property type="entry name" value="TRYPTOPHAN BIOSYNTHESIS PROTEIN"/>
    <property type="match status" value="1"/>
</dbReference>
<dbReference type="Pfam" id="PF00218">
    <property type="entry name" value="IGPS"/>
    <property type="match status" value="1"/>
</dbReference>
<dbReference type="SUPFAM" id="SSF51366">
    <property type="entry name" value="Ribulose-phoshate binding barrel"/>
    <property type="match status" value="1"/>
</dbReference>
<dbReference type="PROSITE" id="PS00614">
    <property type="entry name" value="IGPS"/>
    <property type="match status" value="1"/>
</dbReference>